<evidence type="ECO:0000255" key="1">
    <source>
        <dbReference type="HAMAP-Rule" id="MF_00286"/>
    </source>
</evidence>
<reference key="1">
    <citation type="journal article" date="2006" name="PLoS Genet.">
        <title>The complete genome sequence and comparative genome analysis of the high pathogenicity Yersinia enterocolitica strain 8081.</title>
        <authorList>
            <person name="Thomson N.R."/>
            <person name="Howard S."/>
            <person name="Wren B.W."/>
            <person name="Holden M.T.G."/>
            <person name="Crossman L."/>
            <person name="Challis G.L."/>
            <person name="Churcher C."/>
            <person name="Mungall K."/>
            <person name="Brooks K."/>
            <person name="Chillingworth T."/>
            <person name="Feltwell T."/>
            <person name="Abdellah Z."/>
            <person name="Hauser H."/>
            <person name="Jagels K."/>
            <person name="Maddison M."/>
            <person name="Moule S."/>
            <person name="Sanders M."/>
            <person name="Whitehead S."/>
            <person name="Quail M.A."/>
            <person name="Dougan G."/>
            <person name="Parkhill J."/>
            <person name="Prentice M.B."/>
        </authorList>
    </citation>
    <scope>NUCLEOTIDE SEQUENCE [LARGE SCALE GENOMIC DNA]</scope>
    <source>
        <strain>NCTC 13174 / 8081</strain>
    </source>
</reference>
<accession>A1JQQ3</accession>
<protein>
    <recommendedName>
        <fullName evidence="1">Disulfide bond formation protein B</fullName>
    </recommendedName>
    <alternativeName>
        <fullName evidence="1">Disulfide oxidoreductase</fullName>
    </alternativeName>
</protein>
<dbReference type="EMBL" id="AM286415">
    <property type="protein sequence ID" value="CAL12345.1"/>
    <property type="molecule type" value="Genomic_DNA"/>
</dbReference>
<dbReference type="RefSeq" id="WP_011816443.1">
    <property type="nucleotide sequence ID" value="NC_008800.1"/>
</dbReference>
<dbReference type="RefSeq" id="YP_001006513.1">
    <property type="nucleotide sequence ID" value="NC_008800.1"/>
</dbReference>
<dbReference type="SMR" id="A1JQQ3"/>
<dbReference type="KEGG" id="yen:YE2285"/>
<dbReference type="PATRIC" id="fig|393305.7.peg.2447"/>
<dbReference type="eggNOG" id="COG1495">
    <property type="taxonomic scope" value="Bacteria"/>
</dbReference>
<dbReference type="HOGENOM" id="CLU_098660_2_0_6"/>
<dbReference type="OrthoDB" id="3711263at2"/>
<dbReference type="Proteomes" id="UP000000642">
    <property type="component" value="Chromosome"/>
</dbReference>
<dbReference type="GO" id="GO:0005886">
    <property type="term" value="C:plasma membrane"/>
    <property type="evidence" value="ECO:0007669"/>
    <property type="project" value="UniProtKB-SubCell"/>
</dbReference>
<dbReference type="GO" id="GO:0009055">
    <property type="term" value="F:electron transfer activity"/>
    <property type="evidence" value="ECO:0007669"/>
    <property type="project" value="UniProtKB-UniRule"/>
</dbReference>
<dbReference type="GO" id="GO:0015035">
    <property type="term" value="F:protein-disulfide reductase activity"/>
    <property type="evidence" value="ECO:0007669"/>
    <property type="project" value="UniProtKB-UniRule"/>
</dbReference>
<dbReference type="GO" id="GO:0006457">
    <property type="term" value="P:protein folding"/>
    <property type="evidence" value="ECO:0007669"/>
    <property type="project" value="InterPro"/>
</dbReference>
<dbReference type="FunFam" id="1.20.1550.10:FF:000001">
    <property type="entry name" value="Disulfide bond formation protein B"/>
    <property type="match status" value="1"/>
</dbReference>
<dbReference type="Gene3D" id="1.20.1550.10">
    <property type="entry name" value="DsbB-like"/>
    <property type="match status" value="1"/>
</dbReference>
<dbReference type="HAMAP" id="MF_00286">
    <property type="entry name" value="DsbB"/>
    <property type="match status" value="1"/>
</dbReference>
<dbReference type="InterPro" id="IPR003752">
    <property type="entry name" value="DiS_bond_form_DsbB/BdbC"/>
</dbReference>
<dbReference type="InterPro" id="IPR022920">
    <property type="entry name" value="Disulphide_bond_form_DsbB"/>
</dbReference>
<dbReference type="InterPro" id="IPR050183">
    <property type="entry name" value="DsbB"/>
</dbReference>
<dbReference type="InterPro" id="IPR023380">
    <property type="entry name" value="DsbB-like_sf"/>
</dbReference>
<dbReference type="NCBIfam" id="NF002485">
    <property type="entry name" value="PRK01749.1"/>
    <property type="match status" value="1"/>
</dbReference>
<dbReference type="PANTHER" id="PTHR36570">
    <property type="entry name" value="DISULFIDE BOND FORMATION PROTEIN B"/>
    <property type="match status" value="1"/>
</dbReference>
<dbReference type="PANTHER" id="PTHR36570:SF2">
    <property type="entry name" value="DISULFIDE BOND FORMATION PROTEIN B"/>
    <property type="match status" value="1"/>
</dbReference>
<dbReference type="Pfam" id="PF02600">
    <property type="entry name" value="DsbB"/>
    <property type="match status" value="1"/>
</dbReference>
<dbReference type="SUPFAM" id="SSF158442">
    <property type="entry name" value="DsbB-like"/>
    <property type="match status" value="1"/>
</dbReference>
<gene>
    <name evidence="1" type="primary">dsbB</name>
    <name type="ordered locus">YE2285</name>
</gene>
<comment type="function">
    <text evidence="1">Required for disulfide bond formation in some periplasmic proteins. Acts by oxidizing the DsbA protein.</text>
</comment>
<comment type="subcellular location">
    <subcellularLocation>
        <location evidence="1">Cell inner membrane</location>
        <topology evidence="1">Multi-pass membrane protein</topology>
    </subcellularLocation>
</comment>
<comment type="similarity">
    <text evidence="1">Belongs to the DsbB family.</text>
</comment>
<feature type="chain" id="PRO_0000298425" description="Disulfide bond formation protein B">
    <location>
        <begin position="1"/>
        <end position="176"/>
    </location>
</feature>
<feature type="topological domain" description="Cytoplasmic" evidence="1">
    <location>
        <begin position="1"/>
        <end position="14"/>
    </location>
</feature>
<feature type="transmembrane region" description="Helical" evidence="1">
    <location>
        <begin position="15"/>
        <end position="31"/>
    </location>
</feature>
<feature type="topological domain" description="Periplasmic" evidence="1">
    <location>
        <begin position="32"/>
        <end position="49"/>
    </location>
</feature>
<feature type="transmembrane region" description="Helical" evidence="1">
    <location>
        <begin position="50"/>
        <end position="65"/>
    </location>
</feature>
<feature type="topological domain" description="Cytoplasmic" evidence="1">
    <location>
        <begin position="66"/>
        <end position="71"/>
    </location>
</feature>
<feature type="transmembrane region" description="Helical" evidence="1">
    <location>
        <begin position="72"/>
        <end position="89"/>
    </location>
</feature>
<feature type="topological domain" description="Periplasmic" evidence="1">
    <location>
        <begin position="90"/>
        <end position="144"/>
    </location>
</feature>
<feature type="transmembrane region" description="Helical" evidence="1">
    <location>
        <begin position="145"/>
        <end position="163"/>
    </location>
</feature>
<feature type="topological domain" description="Cytoplasmic" evidence="1">
    <location>
        <begin position="164"/>
        <end position="176"/>
    </location>
</feature>
<feature type="disulfide bond" description="Redox-active" evidence="1">
    <location>
        <begin position="41"/>
        <end position="44"/>
    </location>
</feature>
<feature type="disulfide bond" description="Redox-active" evidence="1">
    <location>
        <begin position="104"/>
        <end position="130"/>
    </location>
</feature>
<sequence>MLQFLNRCSKGRGAWLLMALTALVLELVALYFQHVMLLQPCVMCIYERAALFGILGASLLGAIAPKSPLRYLAIFIWIYSAWKGVQLAWTHTMLQLHPSPFTTCDFFVSFPSWLPLDKWFPAVFVASGDCAVKQWEFLSLEMPQWLVGIFAAYLFIAILVLISQFVKPKRRDLFSR</sequence>
<proteinExistence type="inferred from homology"/>
<organism>
    <name type="scientific">Yersinia enterocolitica serotype O:8 / biotype 1B (strain NCTC 13174 / 8081)</name>
    <dbReference type="NCBI Taxonomy" id="393305"/>
    <lineage>
        <taxon>Bacteria</taxon>
        <taxon>Pseudomonadati</taxon>
        <taxon>Pseudomonadota</taxon>
        <taxon>Gammaproteobacteria</taxon>
        <taxon>Enterobacterales</taxon>
        <taxon>Yersiniaceae</taxon>
        <taxon>Yersinia</taxon>
    </lineage>
</organism>
<keyword id="KW-0997">Cell inner membrane</keyword>
<keyword id="KW-1003">Cell membrane</keyword>
<keyword id="KW-0143">Chaperone</keyword>
<keyword id="KW-1015">Disulfide bond</keyword>
<keyword id="KW-0249">Electron transport</keyword>
<keyword id="KW-0472">Membrane</keyword>
<keyword id="KW-0560">Oxidoreductase</keyword>
<keyword id="KW-0676">Redox-active center</keyword>
<keyword id="KW-0812">Transmembrane</keyword>
<keyword id="KW-1133">Transmembrane helix</keyword>
<keyword id="KW-0813">Transport</keyword>
<name>DSBB_YERE8</name>